<evidence type="ECO:0000255" key="1"/>
<evidence type="ECO:0000255" key="2">
    <source>
        <dbReference type="PROSITE-ProRule" id="PRU00108"/>
    </source>
</evidence>
<evidence type="ECO:0000256" key="3">
    <source>
        <dbReference type="SAM" id="MobiDB-lite"/>
    </source>
</evidence>
<evidence type="ECO:0000305" key="4"/>
<organism>
    <name type="scientific">Mycosarcoma maydis</name>
    <name type="common">Corn smut fungus</name>
    <name type="synonym">Ustilago maydis</name>
    <dbReference type="NCBI Taxonomy" id="5270"/>
    <lineage>
        <taxon>Eukaryota</taxon>
        <taxon>Fungi</taxon>
        <taxon>Dikarya</taxon>
        <taxon>Basidiomycota</taxon>
        <taxon>Ustilaginomycotina</taxon>
        <taxon>Ustilaginomycetes</taxon>
        <taxon>Ustilaginales</taxon>
        <taxon>Ustilaginaceae</taxon>
        <taxon>Mycosarcoma</taxon>
    </lineage>
</organism>
<feature type="chain" id="PRO_0000049407" description="Mating-type locus allele B7 protein">
    <location>
        <begin position="1"/>
        <end position="410"/>
    </location>
</feature>
<feature type="DNA-binding region" description="Homeobox; TALE-type" evidence="2">
    <location>
        <begin position="107"/>
        <end position="184"/>
    </location>
</feature>
<feature type="region of interest" description="Variable domain between B alleles">
    <location>
        <begin position="1"/>
        <end position="110"/>
    </location>
</feature>
<feature type="region of interest" description="Highly conserved between B alleles">
    <location>
        <begin position="111"/>
        <end position="410"/>
    </location>
</feature>
<feature type="region of interest" description="Disordered" evidence="3">
    <location>
        <begin position="202"/>
        <end position="225"/>
    </location>
</feature>
<feature type="region of interest" description="Disordered" evidence="3">
    <location>
        <begin position="278"/>
        <end position="336"/>
    </location>
</feature>
<feature type="region of interest" description="Not essential for B7 function">
    <location>
        <begin position="333"/>
        <end position="410"/>
    </location>
</feature>
<feature type="region of interest" description="Disordered" evidence="3">
    <location>
        <begin position="374"/>
        <end position="394"/>
    </location>
</feature>
<feature type="short sequence motif" description="Nuclear localization signal" evidence="1">
    <location>
        <begin position="276"/>
        <end position="308"/>
    </location>
</feature>
<feature type="compositionally biased region" description="Polar residues" evidence="3">
    <location>
        <begin position="306"/>
        <end position="336"/>
    </location>
</feature>
<feature type="compositionally biased region" description="Basic residues" evidence="3">
    <location>
        <begin position="375"/>
        <end position="388"/>
    </location>
</feature>
<sequence>MSSDPNFSLTSFLECLSQIEHEFLRDKVENPPVLVRKLQELQQKTPGHVASLLHDPETIQQIHQTAHRIEVAVKVFIHIDQKFTSGCSEVVHGTSKVMQEVNVGSPAVGCRNLSEDLPAYHMRKHFLLTLDSPYPTQEEKEGLVRLTNESTARVGLSNATRPPLEVHQLTLWFINARRRSGWSHILKKFAREDRSRMKRLVRAKLSSSTQSSPPSPMPEYPSNNLDNILSDNLGRPLTPADKQQFEDDWASMISWIKYGVKEKVGDWVYDLCAASKKTPKPGMPRPVTTVAKRQPARKTKPAAKPNSRTANPRASTTPSIDSTLDSSKLESTPELSMCSTADTSFSTFGSSLSMSHYNPFQDGNDILQSPTVKARGNRKVKALPKRAGKQQPDEVENGKIPFLCLSVAFV</sequence>
<name>B7_MYCMD</name>
<comment type="function">
    <text>The B locus has at least 25 alleles, and any combination of two different B alleles yields a multimeric regulatory protein, that activates genes responsible for the pathogenicity and for the sexual development of the fungus within the corn plant.</text>
</comment>
<comment type="subcellular location">
    <subcellularLocation>
        <location>Nucleus</location>
    </subcellularLocation>
</comment>
<comment type="similarity">
    <text evidence="4">Belongs to the TALE/M-ATYP homeobox family.</text>
</comment>
<keyword id="KW-0238">DNA-binding</keyword>
<keyword id="KW-0371">Homeobox</keyword>
<keyword id="KW-0539">Nucleus</keyword>
<accession>P22021</accession>
<reference key="1">
    <citation type="journal article" date="1990" name="Genes Dev.">
        <title>The b mating-type locus of Ustilago maydis contains variable and constant regions.</title>
        <authorList>
            <person name="Kronstad J.W."/>
            <person name="Leong S.A."/>
        </authorList>
    </citation>
    <scope>NUCLEOTIDE SEQUENCE [GENOMIC DNA]</scope>
    <source>
        <strain>ATCC 22891 / 43</strain>
    </source>
</reference>
<dbReference type="EMBL" id="X53903">
    <property type="protein sequence ID" value="CAA37871.1"/>
    <property type="molecule type" value="Genomic_DNA"/>
</dbReference>
<dbReference type="EMBL" id="X54070">
    <property type="protein sequence ID" value="CAA38001.1"/>
    <property type="molecule type" value="Genomic_DNA"/>
</dbReference>
<dbReference type="PIR" id="F36671">
    <property type="entry name" value="F36671"/>
</dbReference>
<dbReference type="PIR" id="S21297">
    <property type="entry name" value="S21297"/>
</dbReference>
<dbReference type="SMR" id="P22021"/>
<dbReference type="VEuPathDB" id="FungiDB:UMAG_12052"/>
<dbReference type="GO" id="GO:0005634">
    <property type="term" value="C:nucleus"/>
    <property type="evidence" value="ECO:0007669"/>
    <property type="project" value="UniProtKB-SubCell"/>
</dbReference>
<dbReference type="GO" id="GO:0003677">
    <property type="term" value="F:DNA binding"/>
    <property type="evidence" value="ECO:0007669"/>
    <property type="project" value="UniProtKB-KW"/>
</dbReference>
<dbReference type="GO" id="GO:0006355">
    <property type="term" value="P:regulation of DNA-templated transcription"/>
    <property type="evidence" value="ECO:0007669"/>
    <property type="project" value="InterPro"/>
</dbReference>
<dbReference type="CDD" id="cd00086">
    <property type="entry name" value="homeodomain"/>
    <property type="match status" value="1"/>
</dbReference>
<dbReference type="Gene3D" id="1.10.10.60">
    <property type="entry name" value="Homeodomain-like"/>
    <property type="match status" value="1"/>
</dbReference>
<dbReference type="InterPro" id="IPR001356">
    <property type="entry name" value="HD"/>
</dbReference>
<dbReference type="InterPro" id="IPR009057">
    <property type="entry name" value="Homeodomain-like_sf"/>
</dbReference>
<dbReference type="InterPro" id="IPR008422">
    <property type="entry name" value="KN_HD"/>
</dbReference>
<dbReference type="InterPro" id="IPR008888">
    <property type="entry name" value="Ustilago_mating"/>
</dbReference>
<dbReference type="Pfam" id="PF05920">
    <property type="entry name" value="Homeobox_KN"/>
    <property type="match status" value="1"/>
</dbReference>
<dbReference type="Pfam" id="PF05722">
    <property type="entry name" value="Ustilago_mating"/>
    <property type="match status" value="1"/>
</dbReference>
<dbReference type="SUPFAM" id="SSF46689">
    <property type="entry name" value="Homeodomain-like"/>
    <property type="match status" value="1"/>
</dbReference>
<dbReference type="PROSITE" id="PS50071">
    <property type="entry name" value="HOMEOBOX_2"/>
    <property type="match status" value="1"/>
</dbReference>
<protein>
    <recommendedName>
        <fullName>Mating-type locus allele B7 protein</fullName>
    </recommendedName>
</protein>
<proteinExistence type="inferred from homology"/>